<keyword id="KW-0030">Aminoacyl-tRNA synthetase</keyword>
<keyword id="KW-0067">ATP-binding</keyword>
<keyword id="KW-0963">Cytoplasm</keyword>
<keyword id="KW-0436">Ligase</keyword>
<keyword id="KW-0479">Metal-binding</keyword>
<keyword id="KW-0547">Nucleotide-binding</keyword>
<keyword id="KW-0648">Protein biosynthesis</keyword>
<keyword id="KW-0862">Zinc</keyword>
<accession>A5IS79</accession>
<evidence type="ECO:0000255" key="1">
    <source>
        <dbReference type="HAMAP-Rule" id="MF_02002"/>
    </source>
</evidence>
<proteinExistence type="inferred from homology"/>
<gene>
    <name evidence="1" type="primary">ileS</name>
    <name type="ordered locus">SaurJH9_1252</name>
</gene>
<dbReference type="EC" id="6.1.1.5" evidence="1"/>
<dbReference type="EMBL" id="CP000703">
    <property type="protein sequence ID" value="ABQ49052.1"/>
    <property type="molecule type" value="Genomic_DNA"/>
</dbReference>
<dbReference type="RefSeq" id="WP_000384691.1">
    <property type="nucleotide sequence ID" value="NC_009487.1"/>
</dbReference>
<dbReference type="SMR" id="A5IS79"/>
<dbReference type="KEGG" id="saj:SaurJH9_1252"/>
<dbReference type="HOGENOM" id="CLU_001493_7_1_9"/>
<dbReference type="GO" id="GO:0005829">
    <property type="term" value="C:cytosol"/>
    <property type="evidence" value="ECO:0007669"/>
    <property type="project" value="TreeGrafter"/>
</dbReference>
<dbReference type="GO" id="GO:0002161">
    <property type="term" value="F:aminoacyl-tRNA deacylase activity"/>
    <property type="evidence" value="ECO:0007669"/>
    <property type="project" value="InterPro"/>
</dbReference>
<dbReference type="GO" id="GO:0005524">
    <property type="term" value="F:ATP binding"/>
    <property type="evidence" value="ECO:0007669"/>
    <property type="project" value="UniProtKB-UniRule"/>
</dbReference>
<dbReference type="GO" id="GO:0004822">
    <property type="term" value="F:isoleucine-tRNA ligase activity"/>
    <property type="evidence" value="ECO:0007669"/>
    <property type="project" value="UniProtKB-UniRule"/>
</dbReference>
<dbReference type="GO" id="GO:0000049">
    <property type="term" value="F:tRNA binding"/>
    <property type="evidence" value="ECO:0007669"/>
    <property type="project" value="InterPro"/>
</dbReference>
<dbReference type="GO" id="GO:0008270">
    <property type="term" value="F:zinc ion binding"/>
    <property type="evidence" value="ECO:0007669"/>
    <property type="project" value="UniProtKB-UniRule"/>
</dbReference>
<dbReference type="GO" id="GO:0006428">
    <property type="term" value="P:isoleucyl-tRNA aminoacylation"/>
    <property type="evidence" value="ECO:0007669"/>
    <property type="project" value="UniProtKB-UniRule"/>
</dbReference>
<dbReference type="CDD" id="cd07960">
    <property type="entry name" value="Anticodon_Ia_Ile_BEm"/>
    <property type="match status" value="1"/>
</dbReference>
<dbReference type="CDD" id="cd00818">
    <property type="entry name" value="IleRS_core"/>
    <property type="match status" value="1"/>
</dbReference>
<dbReference type="FunFam" id="1.10.10.830:FF:000001">
    <property type="entry name" value="Isoleucine--tRNA ligase"/>
    <property type="match status" value="1"/>
</dbReference>
<dbReference type="FunFam" id="1.10.730.20:FF:000001">
    <property type="entry name" value="Isoleucine--tRNA ligase"/>
    <property type="match status" value="1"/>
</dbReference>
<dbReference type="FunFam" id="3.40.50.620:FF:000152">
    <property type="entry name" value="Isoleucine--tRNA ligase"/>
    <property type="match status" value="1"/>
</dbReference>
<dbReference type="FunFam" id="3.90.740.10:FF:000006">
    <property type="entry name" value="Isoleucine--tRNA ligase"/>
    <property type="match status" value="1"/>
</dbReference>
<dbReference type="Gene3D" id="1.10.730.20">
    <property type="match status" value="1"/>
</dbReference>
<dbReference type="Gene3D" id="3.40.50.620">
    <property type="entry name" value="HUPs"/>
    <property type="match status" value="2"/>
</dbReference>
<dbReference type="Gene3D" id="1.10.10.830">
    <property type="entry name" value="Ile-tRNA synthetase CP2 domain-like"/>
    <property type="match status" value="1"/>
</dbReference>
<dbReference type="HAMAP" id="MF_02002">
    <property type="entry name" value="Ile_tRNA_synth_type1"/>
    <property type="match status" value="1"/>
</dbReference>
<dbReference type="InterPro" id="IPR001412">
    <property type="entry name" value="aa-tRNA-synth_I_CS"/>
</dbReference>
<dbReference type="InterPro" id="IPR002300">
    <property type="entry name" value="aa-tRNA-synth_Ia"/>
</dbReference>
<dbReference type="InterPro" id="IPR033708">
    <property type="entry name" value="Anticodon_Ile_BEm"/>
</dbReference>
<dbReference type="InterPro" id="IPR002301">
    <property type="entry name" value="Ile-tRNA-ligase"/>
</dbReference>
<dbReference type="InterPro" id="IPR023585">
    <property type="entry name" value="Ile-tRNA-ligase_type1"/>
</dbReference>
<dbReference type="InterPro" id="IPR050081">
    <property type="entry name" value="Ile-tRNA_ligase"/>
</dbReference>
<dbReference type="InterPro" id="IPR013155">
    <property type="entry name" value="M/V/L/I-tRNA-synth_anticd-bd"/>
</dbReference>
<dbReference type="InterPro" id="IPR014729">
    <property type="entry name" value="Rossmann-like_a/b/a_fold"/>
</dbReference>
<dbReference type="InterPro" id="IPR009080">
    <property type="entry name" value="tRNAsynth_Ia_anticodon-bd"/>
</dbReference>
<dbReference type="InterPro" id="IPR009008">
    <property type="entry name" value="Val/Leu/Ile-tRNA-synth_edit"/>
</dbReference>
<dbReference type="InterPro" id="IPR010663">
    <property type="entry name" value="Znf_FPG/IleRS"/>
</dbReference>
<dbReference type="NCBIfam" id="TIGR00392">
    <property type="entry name" value="ileS"/>
    <property type="match status" value="1"/>
</dbReference>
<dbReference type="PANTHER" id="PTHR42765:SF1">
    <property type="entry name" value="ISOLEUCINE--TRNA LIGASE, MITOCHONDRIAL"/>
    <property type="match status" value="1"/>
</dbReference>
<dbReference type="PANTHER" id="PTHR42765">
    <property type="entry name" value="SOLEUCYL-TRNA SYNTHETASE"/>
    <property type="match status" value="1"/>
</dbReference>
<dbReference type="Pfam" id="PF08264">
    <property type="entry name" value="Anticodon_1"/>
    <property type="match status" value="1"/>
</dbReference>
<dbReference type="Pfam" id="PF00133">
    <property type="entry name" value="tRNA-synt_1"/>
    <property type="match status" value="1"/>
</dbReference>
<dbReference type="Pfam" id="PF06827">
    <property type="entry name" value="zf-FPG_IleRS"/>
    <property type="match status" value="1"/>
</dbReference>
<dbReference type="PRINTS" id="PR00984">
    <property type="entry name" value="TRNASYNTHILE"/>
</dbReference>
<dbReference type="SUPFAM" id="SSF47323">
    <property type="entry name" value="Anticodon-binding domain of a subclass of class I aminoacyl-tRNA synthetases"/>
    <property type="match status" value="1"/>
</dbReference>
<dbReference type="SUPFAM" id="SSF52374">
    <property type="entry name" value="Nucleotidylyl transferase"/>
    <property type="match status" value="1"/>
</dbReference>
<dbReference type="SUPFAM" id="SSF50677">
    <property type="entry name" value="ValRS/IleRS/LeuRS editing domain"/>
    <property type="match status" value="1"/>
</dbReference>
<dbReference type="PROSITE" id="PS00178">
    <property type="entry name" value="AA_TRNA_LIGASE_I"/>
    <property type="match status" value="1"/>
</dbReference>
<name>SYI_STAA9</name>
<feature type="chain" id="PRO_1000088558" description="Isoleucine--tRNA ligase">
    <location>
        <begin position="1"/>
        <end position="917"/>
    </location>
</feature>
<feature type="short sequence motif" description="'HIGH' region">
    <location>
        <begin position="57"/>
        <end position="67"/>
    </location>
</feature>
<feature type="short sequence motif" description="'KMSKS' region">
    <location>
        <begin position="595"/>
        <end position="599"/>
    </location>
</feature>
<feature type="binding site" evidence="1">
    <location>
        <position position="554"/>
    </location>
    <ligand>
        <name>L-isoleucyl-5'-AMP</name>
        <dbReference type="ChEBI" id="CHEBI:178002"/>
    </ligand>
</feature>
<feature type="binding site" evidence="1">
    <location>
        <position position="598"/>
    </location>
    <ligand>
        <name>ATP</name>
        <dbReference type="ChEBI" id="CHEBI:30616"/>
    </ligand>
</feature>
<feature type="binding site" evidence="1">
    <location>
        <position position="886"/>
    </location>
    <ligand>
        <name>Zn(2+)</name>
        <dbReference type="ChEBI" id="CHEBI:29105"/>
    </ligand>
</feature>
<feature type="binding site" evidence="1">
    <location>
        <position position="889"/>
    </location>
    <ligand>
        <name>Zn(2+)</name>
        <dbReference type="ChEBI" id="CHEBI:29105"/>
    </ligand>
</feature>
<feature type="binding site" evidence="1">
    <location>
        <position position="906"/>
    </location>
    <ligand>
        <name>Zn(2+)</name>
        <dbReference type="ChEBI" id="CHEBI:29105"/>
    </ligand>
</feature>
<feature type="binding site" evidence="1">
    <location>
        <position position="909"/>
    </location>
    <ligand>
        <name>Zn(2+)</name>
        <dbReference type="ChEBI" id="CHEBI:29105"/>
    </ligand>
</feature>
<reference key="1">
    <citation type="submission" date="2007-05" db="EMBL/GenBank/DDBJ databases">
        <title>Complete sequence of chromosome of Staphylococcus aureus subsp. aureus JH9.</title>
        <authorList>
            <consortium name="US DOE Joint Genome Institute"/>
            <person name="Copeland A."/>
            <person name="Lucas S."/>
            <person name="Lapidus A."/>
            <person name="Barry K."/>
            <person name="Detter J.C."/>
            <person name="Glavina del Rio T."/>
            <person name="Hammon N."/>
            <person name="Israni S."/>
            <person name="Pitluck S."/>
            <person name="Chain P."/>
            <person name="Malfatti S."/>
            <person name="Shin M."/>
            <person name="Vergez L."/>
            <person name="Schmutz J."/>
            <person name="Larimer F."/>
            <person name="Land M."/>
            <person name="Hauser L."/>
            <person name="Kyrpides N."/>
            <person name="Kim E."/>
            <person name="Tomasz A."/>
            <person name="Richardson P."/>
        </authorList>
    </citation>
    <scope>NUCLEOTIDE SEQUENCE [LARGE SCALE GENOMIC DNA]</scope>
    <source>
        <strain>JH9</strain>
    </source>
</reference>
<organism>
    <name type="scientific">Staphylococcus aureus (strain JH9)</name>
    <dbReference type="NCBI Taxonomy" id="359786"/>
    <lineage>
        <taxon>Bacteria</taxon>
        <taxon>Bacillati</taxon>
        <taxon>Bacillota</taxon>
        <taxon>Bacilli</taxon>
        <taxon>Bacillales</taxon>
        <taxon>Staphylococcaceae</taxon>
        <taxon>Staphylococcus</taxon>
    </lineage>
</organism>
<comment type="function">
    <text evidence="1">Catalyzes the attachment of isoleucine to tRNA(Ile). As IleRS can inadvertently accommodate and process structurally similar amino acids such as valine, to avoid such errors it has two additional distinct tRNA(Ile)-dependent editing activities. One activity is designated as 'pretransfer' editing and involves the hydrolysis of activated Val-AMP. The other activity is designated 'posttransfer' editing and involves deacylation of mischarged Val-tRNA(Ile).</text>
</comment>
<comment type="catalytic activity">
    <reaction evidence="1">
        <text>tRNA(Ile) + L-isoleucine + ATP = L-isoleucyl-tRNA(Ile) + AMP + diphosphate</text>
        <dbReference type="Rhea" id="RHEA:11060"/>
        <dbReference type="Rhea" id="RHEA-COMP:9666"/>
        <dbReference type="Rhea" id="RHEA-COMP:9695"/>
        <dbReference type="ChEBI" id="CHEBI:30616"/>
        <dbReference type="ChEBI" id="CHEBI:33019"/>
        <dbReference type="ChEBI" id="CHEBI:58045"/>
        <dbReference type="ChEBI" id="CHEBI:78442"/>
        <dbReference type="ChEBI" id="CHEBI:78528"/>
        <dbReference type="ChEBI" id="CHEBI:456215"/>
        <dbReference type="EC" id="6.1.1.5"/>
    </reaction>
</comment>
<comment type="cofactor">
    <cofactor evidence="1">
        <name>Zn(2+)</name>
        <dbReference type="ChEBI" id="CHEBI:29105"/>
    </cofactor>
    <text evidence="1">Binds 1 zinc ion per subunit.</text>
</comment>
<comment type="subunit">
    <text evidence="1">Monomer.</text>
</comment>
<comment type="subcellular location">
    <subcellularLocation>
        <location evidence="1">Cytoplasm</location>
    </subcellularLocation>
</comment>
<comment type="domain">
    <text evidence="1">IleRS has two distinct active sites: one for aminoacylation and one for editing. The misactivated valine is translocated from the active site to the editing site, which sterically excludes the correctly activated isoleucine. The single editing site contains two valyl binding pockets, one specific for each substrate (Val-AMP or Val-tRNA(Ile)).</text>
</comment>
<comment type="similarity">
    <text evidence="1">Belongs to the class-I aminoacyl-tRNA synthetase family. IleS type 1 subfamily.</text>
</comment>
<protein>
    <recommendedName>
        <fullName evidence="1">Isoleucine--tRNA ligase</fullName>
        <ecNumber evidence="1">6.1.1.5</ecNumber>
    </recommendedName>
    <alternativeName>
        <fullName evidence="1">Isoleucyl-tRNA synthetase</fullName>
        <shortName evidence="1">IleRS</shortName>
    </alternativeName>
</protein>
<sequence length="917" mass="104886">MDYKETLLMPKTDFPMRGGLPNKEPQIQEKWDAEDQYHKALEKNKGNETFILHDGPPYANGNLHMGHALNKILKDFIVRYKTMQGFYAPYVPGWDTHGLPIEQALTKKGVDRKKMSTAEFREKCKEFALEQIELQKKDFRRLGVRGDFNDPYITLKPEYEAAQIRIFGEMADKGLIYKGKKPVYWSPSSESSLAEAEIEYHDKRSASIYVAFDVKDDKGVVDADAKFIIWTTTPWTIPSNVAITVHPELKYGQYNVNGEKYIIAEALSDAVAEALDWDKASIKLEKEYTGKELEYVVAQHPFLDRESLVINGDHVTTDAGTGCVHTAPGHGEDDYIVGQKYELPVISPIDDKGVFTEEGGQFEGMFYDKANKAVTDLLTEKGALLKLDFITHSYPHDWRTKKPVIFRATPQWFASISKVRQDILDAIENTNFKVNWGKTRIYNMVRDRGEWVISRQRVWGVPLPVFYAENGEIIMTKETVNHVADLFAEHGSNIWFEREAKDLLPEGFTHPGSPNGTFTKETDIMDVWFDSGSSHRGVLETRPELSFPADMYLEGSDQYRGWFNSSITTSVATRGVSPYKFLLSHGFVMDGEGKKMSKSLGNVIVPDQVVKQKGADIARLWVSSTDYLADVRISDEILKQTSDVYRKIRNTLRFMLGNINDFNPDTDSIPESELLEVDRYLLNRLREFTASTINNYENFDYLNIYQEVQNFINVELSNFYLDYGKDILYIEQRDSHIRRSMQTVLYQILVDMTKLLAPILVHTAEEVWSHTPHVKEESVHLADMPKVVEVDQALLDKWRTFMNLRDDVNRALETARNEKVIGKSLEAKVTIASNDKFNASEFLTSFDALHQLFIVSQVKVVDKLDDQATAYEHGDIVIEHADGEKCERCWNYSEDLGAVDELTHLCPRCQQVVKSLV</sequence>